<accession>P58342</accession>
<organism>
    <name type="scientific">Rhizobium meliloti (strain 1021)</name>
    <name type="common">Ensifer meliloti</name>
    <name type="synonym">Sinorhizobium meliloti</name>
    <dbReference type="NCBI Taxonomy" id="266834"/>
    <lineage>
        <taxon>Bacteria</taxon>
        <taxon>Pseudomonadati</taxon>
        <taxon>Pseudomonadota</taxon>
        <taxon>Alphaproteobacteria</taxon>
        <taxon>Hyphomicrobiales</taxon>
        <taxon>Rhizobiaceae</taxon>
        <taxon>Sinorhizobium/Ensifer group</taxon>
        <taxon>Sinorhizobium</taxon>
    </lineage>
</organism>
<keyword id="KW-0067">ATP-binding</keyword>
<keyword id="KW-1003">Cell membrane</keyword>
<keyword id="KW-0186">Copper</keyword>
<keyword id="KW-0187">Copper transport</keyword>
<keyword id="KW-0406">Ion transport</keyword>
<keyword id="KW-0460">Magnesium</keyword>
<keyword id="KW-0472">Membrane</keyword>
<keyword id="KW-0479">Metal-binding</keyword>
<keyword id="KW-0547">Nucleotide-binding</keyword>
<keyword id="KW-0597">Phosphoprotein</keyword>
<keyword id="KW-0614">Plasmid</keyword>
<keyword id="KW-1185">Reference proteome</keyword>
<keyword id="KW-0677">Repeat</keyword>
<keyword id="KW-1278">Translocase</keyword>
<keyword id="KW-0812">Transmembrane</keyword>
<keyword id="KW-1133">Transmembrane helix</keyword>
<keyword id="KW-0813">Transport</keyword>
<dbReference type="EC" id="7.2.2.9"/>
<dbReference type="EMBL" id="AL591985">
    <property type="protein sequence ID" value="CAC49418.1"/>
    <property type="molecule type" value="Genomic_DNA"/>
</dbReference>
<dbReference type="PIR" id="B95969">
    <property type="entry name" value="B95969"/>
</dbReference>
<dbReference type="RefSeq" id="NP_437558.1">
    <property type="nucleotide sequence ID" value="NC_003078.1"/>
</dbReference>
<dbReference type="RefSeq" id="WP_010975861.1">
    <property type="nucleotide sequence ID" value="NC_003078.1"/>
</dbReference>
<dbReference type="SMR" id="P58342"/>
<dbReference type="EnsemblBacteria" id="CAC49418">
    <property type="protein sequence ID" value="CAC49418"/>
    <property type="gene ID" value="SM_b21578"/>
</dbReference>
<dbReference type="KEGG" id="sme:SM_b21578"/>
<dbReference type="PATRIC" id="fig|266834.11.peg.5945"/>
<dbReference type="eggNOG" id="COG2217">
    <property type="taxonomic scope" value="Bacteria"/>
</dbReference>
<dbReference type="HOGENOM" id="CLU_001771_0_3_5"/>
<dbReference type="OrthoDB" id="9807843at2"/>
<dbReference type="Proteomes" id="UP000001976">
    <property type="component" value="Plasmid pSymB"/>
</dbReference>
<dbReference type="GO" id="GO:0005886">
    <property type="term" value="C:plasma membrane"/>
    <property type="evidence" value="ECO:0007669"/>
    <property type="project" value="UniProtKB-SubCell"/>
</dbReference>
<dbReference type="GO" id="GO:0005524">
    <property type="term" value="F:ATP binding"/>
    <property type="evidence" value="ECO:0007669"/>
    <property type="project" value="UniProtKB-KW"/>
</dbReference>
<dbReference type="GO" id="GO:0016887">
    <property type="term" value="F:ATP hydrolysis activity"/>
    <property type="evidence" value="ECO:0007669"/>
    <property type="project" value="InterPro"/>
</dbReference>
<dbReference type="GO" id="GO:0005507">
    <property type="term" value="F:copper ion binding"/>
    <property type="evidence" value="ECO:0007669"/>
    <property type="project" value="InterPro"/>
</dbReference>
<dbReference type="GO" id="GO:0043682">
    <property type="term" value="F:P-type divalent copper transporter activity"/>
    <property type="evidence" value="ECO:0007669"/>
    <property type="project" value="UniProtKB-EC"/>
</dbReference>
<dbReference type="GO" id="GO:0055070">
    <property type="term" value="P:copper ion homeostasis"/>
    <property type="evidence" value="ECO:0007669"/>
    <property type="project" value="TreeGrafter"/>
</dbReference>
<dbReference type="CDD" id="cd00371">
    <property type="entry name" value="HMA"/>
    <property type="match status" value="2"/>
</dbReference>
<dbReference type="CDD" id="cd02094">
    <property type="entry name" value="P-type_ATPase_Cu-like"/>
    <property type="match status" value="1"/>
</dbReference>
<dbReference type="FunFam" id="3.30.70.100:FF:000005">
    <property type="entry name" value="Copper-exporting P-type ATPase A"/>
    <property type="match status" value="2"/>
</dbReference>
<dbReference type="FunFam" id="2.70.150.10:FF:000002">
    <property type="entry name" value="Copper-transporting ATPase 1, putative"/>
    <property type="match status" value="1"/>
</dbReference>
<dbReference type="Gene3D" id="3.30.70.100">
    <property type="match status" value="2"/>
</dbReference>
<dbReference type="Gene3D" id="3.40.1110.10">
    <property type="entry name" value="Calcium-transporting ATPase, cytoplasmic domain N"/>
    <property type="match status" value="1"/>
</dbReference>
<dbReference type="Gene3D" id="2.70.150.10">
    <property type="entry name" value="Calcium-transporting ATPase, cytoplasmic transduction domain A"/>
    <property type="match status" value="1"/>
</dbReference>
<dbReference type="Gene3D" id="3.40.50.1000">
    <property type="entry name" value="HAD superfamily/HAD-like"/>
    <property type="match status" value="1"/>
</dbReference>
<dbReference type="InterPro" id="IPR023299">
    <property type="entry name" value="ATPase_P-typ_cyto_dom_N"/>
</dbReference>
<dbReference type="InterPro" id="IPR018303">
    <property type="entry name" value="ATPase_P-typ_P_site"/>
</dbReference>
<dbReference type="InterPro" id="IPR023298">
    <property type="entry name" value="ATPase_P-typ_TM_dom_sf"/>
</dbReference>
<dbReference type="InterPro" id="IPR008250">
    <property type="entry name" value="ATPase_P-typ_transduc_dom_A_sf"/>
</dbReference>
<dbReference type="InterPro" id="IPR036412">
    <property type="entry name" value="HAD-like_sf"/>
</dbReference>
<dbReference type="InterPro" id="IPR023214">
    <property type="entry name" value="HAD_sf"/>
</dbReference>
<dbReference type="InterPro" id="IPR017969">
    <property type="entry name" value="Heavy-metal-associated_CS"/>
</dbReference>
<dbReference type="InterPro" id="IPR006122">
    <property type="entry name" value="HMA_Cu_ion-bd"/>
</dbReference>
<dbReference type="InterPro" id="IPR006121">
    <property type="entry name" value="HMA_dom"/>
</dbReference>
<dbReference type="InterPro" id="IPR036163">
    <property type="entry name" value="HMA_dom_sf"/>
</dbReference>
<dbReference type="InterPro" id="IPR027256">
    <property type="entry name" value="P-typ_ATPase_IB"/>
</dbReference>
<dbReference type="InterPro" id="IPR001757">
    <property type="entry name" value="P_typ_ATPase"/>
</dbReference>
<dbReference type="InterPro" id="IPR044492">
    <property type="entry name" value="P_typ_ATPase_HD_dom"/>
</dbReference>
<dbReference type="NCBIfam" id="TIGR01511">
    <property type="entry name" value="ATPase-IB1_Cu"/>
    <property type="match status" value="1"/>
</dbReference>
<dbReference type="NCBIfam" id="TIGR01525">
    <property type="entry name" value="ATPase-IB_hvy"/>
    <property type="match status" value="1"/>
</dbReference>
<dbReference type="NCBIfam" id="TIGR01494">
    <property type="entry name" value="ATPase_P-type"/>
    <property type="match status" value="1"/>
</dbReference>
<dbReference type="NCBIfam" id="TIGR00003">
    <property type="entry name" value="copper ion binding protein"/>
    <property type="match status" value="2"/>
</dbReference>
<dbReference type="PANTHER" id="PTHR43520">
    <property type="entry name" value="ATP7, ISOFORM B"/>
    <property type="match status" value="1"/>
</dbReference>
<dbReference type="PANTHER" id="PTHR43520:SF8">
    <property type="entry name" value="P-TYPE CU(+) TRANSPORTER"/>
    <property type="match status" value="1"/>
</dbReference>
<dbReference type="Pfam" id="PF00122">
    <property type="entry name" value="E1-E2_ATPase"/>
    <property type="match status" value="1"/>
</dbReference>
<dbReference type="Pfam" id="PF00403">
    <property type="entry name" value="HMA"/>
    <property type="match status" value="2"/>
</dbReference>
<dbReference type="Pfam" id="PF00702">
    <property type="entry name" value="Hydrolase"/>
    <property type="match status" value="1"/>
</dbReference>
<dbReference type="PRINTS" id="PR00119">
    <property type="entry name" value="CATATPASE"/>
</dbReference>
<dbReference type="PRINTS" id="PR00120">
    <property type="entry name" value="HATPASE"/>
</dbReference>
<dbReference type="SFLD" id="SFLDG00002">
    <property type="entry name" value="C1.7:_P-type_atpase_like"/>
    <property type="match status" value="1"/>
</dbReference>
<dbReference type="SFLD" id="SFLDF00027">
    <property type="entry name" value="p-type_atpase"/>
    <property type="match status" value="1"/>
</dbReference>
<dbReference type="SUPFAM" id="SSF81653">
    <property type="entry name" value="Calcium ATPase, transduction domain A"/>
    <property type="match status" value="1"/>
</dbReference>
<dbReference type="SUPFAM" id="SSF81665">
    <property type="entry name" value="Calcium ATPase, transmembrane domain M"/>
    <property type="match status" value="1"/>
</dbReference>
<dbReference type="SUPFAM" id="SSF56784">
    <property type="entry name" value="HAD-like"/>
    <property type="match status" value="1"/>
</dbReference>
<dbReference type="SUPFAM" id="SSF55008">
    <property type="entry name" value="HMA, heavy metal-associated domain"/>
    <property type="match status" value="2"/>
</dbReference>
<dbReference type="PROSITE" id="PS00154">
    <property type="entry name" value="ATPASE_E1_E2"/>
    <property type="match status" value="1"/>
</dbReference>
<dbReference type="PROSITE" id="PS01047">
    <property type="entry name" value="HMA_1"/>
    <property type="match status" value="2"/>
</dbReference>
<dbReference type="PROSITE" id="PS50846">
    <property type="entry name" value="HMA_2"/>
    <property type="match status" value="2"/>
</dbReference>
<geneLocation type="plasmid">
    <name>pSymB</name>
    <name>megaplasmid 2</name>
</geneLocation>
<reference key="1">
    <citation type="journal article" date="2001" name="Proc. Natl. Acad. Sci. U.S.A.">
        <title>The complete sequence of the 1,683-kb pSymB megaplasmid from the N2-fixing endosymbiont Sinorhizobium meliloti.</title>
        <authorList>
            <person name="Finan T.M."/>
            <person name="Weidner S."/>
            <person name="Wong K."/>
            <person name="Buhrmester J."/>
            <person name="Chain P."/>
            <person name="Vorhoelter F.J."/>
            <person name="Hernandez-Lucas I."/>
            <person name="Becker A."/>
            <person name="Cowie A."/>
            <person name="Gouzy J."/>
            <person name="Golding B."/>
            <person name="Puehler A."/>
        </authorList>
    </citation>
    <scope>NUCLEOTIDE SEQUENCE [LARGE SCALE GENOMIC DNA]</scope>
    <source>
        <strain>1021</strain>
    </source>
</reference>
<reference key="2">
    <citation type="journal article" date="2001" name="Science">
        <title>The composite genome of the legume symbiont Sinorhizobium meliloti.</title>
        <authorList>
            <person name="Galibert F."/>
            <person name="Finan T.M."/>
            <person name="Long S.R."/>
            <person name="Puehler A."/>
            <person name="Abola P."/>
            <person name="Ampe F."/>
            <person name="Barloy-Hubler F."/>
            <person name="Barnett M.J."/>
            <person name="Becker A."/>
            <person name="Boistard P."/>
            <person name="Bothe G."/>
            <person name="Boutry M."/>
            <person name="Bowser L."/>
            <person name="Buhrmester J."/>
            <person name="Cadieu E."/>
            <person name="Capela D."/>
            <person name="Chain P."/>
            <person name="Cowie A."/>
            <person name="Davis R.W."/>
            <person name="Dreano S."/>
            <person name="Federspiel N.A."/>
            <person name="Fisher R.F."/>
            <person name="Gloux S."/>
            <person name="Godrie T."/>
            <person name="Goffeau A."/>
            <person name="Golding B."/>
            <person name="Gouzy J."/>
            <person name="Gurjal M."/>
            <person name="Hernandez-Lucas I."/>
            <person name="Hong A."/>
            <person name="Huizar L."/>
            <person name="Hyman R.W."/>
            <person name="Jones T."/>
            <person name="Kahn D."/>
            <person name="Kahn M.L."/>
            <person name="Kalman S."/>
            <person name="Keating D.H."/>
            <person name="Kiss E."/>
            <person name="Komp C."/>
            <person name="Lelaure V."/>
            <person name="Masuy D."/>
            <person name="Palm C."/>
            <person name="Peck M.C."/>
            <person name="Pohl T.M."/>
            <person name="Portetelle D."/>
            <person name="Purnelle B."/>
            <person name="Ramsperger U."/>
            <person name="Surzycki R."/>
            <person name="Thebault P."/>
            <person name="Vandenbol M."/>
            <person name="Vorhoelter F.J."/>
            <person name="Weidner S."/>
            <person name="Wells D.H."/>
            <person name="Wong K."/>
            <person name="Yeh K.-C."/>
            <person name="Batut J."/>
        </authorList>
    </citation>
    <scope>NUCLEOTIDE SEQUENCE [LARGE SCALE GENOMIC DNA]</scope>
    <source>
        <strain>1021</strain>
    </source>
</reference>
<protein>
    <recommendedName>
        <fullName>Copper-transporting ATPase 2</fullName>
        <ecNumber>7.2.2.9</ecNumber>
    </recommendedName>
</protein>
<sequence length="827" mass="85862">MTALKKIEKAAPLPVSTNFGIEGMTCASCVRRVEKAITAVPGVASANVNLATERATVQFDGEPDTLAVLHAIEKAGYAPRIATEELQIEGMTCASCVSRVEKALKAVPGVADAAVNLATEKATVSLISGTADLSALEAAVRGAGYELRKTKPAEASAGDEDHRAAELGSLKSAVTISVLMTLPLFLMEMGSHFISGVHELIMGTIGMRNNLYLQFALATLVLFGPGLRFFRKGVPNLLRWTPDMNSLVVLGTTAAWGYSVVATFVPRVLPSGTANVYYEAAAVIVTLVLLGRYLESRAKGRTSQAIKRLVGLQPKTAFVLRGGEFVEAQISEVVAGDVIRIRPGEKIPVDGTVIDGSSYVDEAMITGEPLPVQKTADSAVVGGTINKTGSITFKATKVGSDTLLAQIIKLVETAQGSKLPIQALVDRVTGWFVPAVILAAVLTFAAWYTFGPSPALSFALVNAVAVLIIACPCAMGLATPTSIMVGTGRAAELGILFRKGEALQRLRDADVVALDKTGTLTKGRPELTDLVAAEGFEADEVLFLVASLETLSEHPIAEAIVSAAKSKGIATAAVNGFEATPGFGVSGSVSGRQVLVGADRALATNGIDVSGFSTEAELLGASGKSPLYAAIEGRLAAIVAVSDPVKETTPQAIRSLHELGLKVAMITGDNRRTAEAIARKLGIDEVVAEVLPEGKVEAIRKLRQGGRSVAFIGDGINDAPALAEADVGIAVGTGTDIAIESADVVLMSGDLNGVAKAIALSKATILNIKQNLFWAFAYNVSLIPVAAGVLYPVTGILLSPIFAAAAMAMSSVFVLGNALRLKSVNPA</sequence>
<feature type="chain" id="PRO_0000046328" description="Copper-transporting ATPase 2">
    <location>
        <begin position="1"/>
        <end position="827"/>
    </location>
</feature>
<feature type="transmembrane region" description="Helical" evidence="2">
    <location>
        <begin position="174"/>
        <end position="194"/>
    </location>
</feature>
<feature type="transmembrane region" description="Helical" evidence="2">
    <location>
        <begin position="210"/>
        <end position="230"/>
    </location>
</feature>
<feature type="transmembrane region" description="Helical" evidence="2">
    <location>
        <begin position="246"/>
        <end position="266"/>
    </location>
</feature>
<feature type="transmembrane region" description="Helical" evidence="2">
    <location>
        <begin position="271"/>
        <end position="291"/>
    </location>
</feature>
<feature type="transmembrane region" description="Helical" evidence="2">
    <location>
        <begin position="430"/>
        <end position="450"/>
    </location>
</feature>
<feature type="transmembrane region" description="Helical" evidence="2">
    <location>
        <begin position="458"/>
        <end position="478"/>
    </location>
</feature>
<feature type="transmembrane region" description="Helical" evidence="2">
    <location>
        <begin position="771"/>
        <end position="793"/>
    </location>
</feature>
<feature type="transmembrane region" description="Helical" evidence="2">
    <location>
        <begin position="797"/>
        <end position="819"/>
    </location>
</feature>
<feature type="domain" description="HMA 1" evidence="3">
    <location>
        <begin position="15"/>
        <end position="80"/>
    </location>
</feature>
<feature type="domain" description="HMA 2" evidence="3">
    <location>
        <begin position="82"/>
        <end position="148"/>
    </location>
</feature>
<feature type="active site" description="4-aspartylphosphate intermediate" evidence="1">
    <location>
        <position position="515"/>
    </location>
</feature>
<feature type="binding site" evidence="3">
    <location>
        <position position="26"/>
    </location>
    <ligand>
        <name>Cu cation</name>
        <dbReference type="ChEBI" id="CHEBI:23378"/>
        <label>1</label>
    </ligand>
</feature>
<feature type="binding site" evidence="3">
    <location>
        <position position="29"/>
    </location>
    <ligand>
        <name>Cu cation</name>
        <dbReference type="ChEBI" id="CHEBI:23378"/>
        <label>1</label>
    </ligand>
</feature>
<feature type="binding site" evidence="3">
    <location>
        <position position="93"/>
    </location>
    <ligand>
        <name>Cu cation</name>
        <dbReference type="ChEBI" id="CHEBI:23378"/>
        <label>2</label>
    </ligand>
</feature>
<feature type="binding site" evidence="3">
    <location>
        <position position="96"/>
    </location>
    <ligand>
        <name>Cu cation</name>
        <dbReference type="ChEBI" id="CHEBI:23378"/>
        <label>2</label>
    </ligand>
</feature>
<feature type="binding site">
    <location>
        <position position="714"/>
    </location>
    <ligand>
        <name>Mg(2+)</name>
        <dbReference type="ChEBI" id="CHEBI:18420"/>
    </ligand>
</feature>
<feature type="binding site">
    <location>
        <position position="718"/>
    </location>
    <ligand>
        <name>Mg(2+)</name>
        <dbReference type="ChEBI" id="CHEBI:18420"/>
    </ligand>
</feature>
<proteinExistence type="inferred from homology"/>
<gene>
    <name type="primary">actP2</name>
    <name type="synonym">atcU2</name>
    <name type="ordered locus">RB1018</name>
    <name type="ORF">SMb21578</name>
</gene>
<name>ATCU2_RHIME</name>
<evidence type="ECO:0000250" key="1"/>
<evidence type="ECO:0000255" key="2"/>
<evidence type="ECO:0000255" key="3">
    <source>
        <dbReference type="PROSITE-ProRule" id="PRU00280"/>
    </source>
</evidence>
<evidence type="ECO:0000305" key="4"/>
<comment type="function">
    <text evidence="1">Involved in copper transport.</text>
</comment>
<comment type="catalytic activity">
    <reaction>
        <text>Cu(2+)(in) + ATP + H2O = Cu(2+)(out) + ADP + phosphate + H(+)</text>
        <dbReference type="Rhea" id="RHEA:10376"/>
        <dbReference type="ChEBI" id="CHEBI:15377"/>
        <dbReference type="ChEBI" id="CHEBI:15378"/>
        <dbReference type="ChEBI" id="CHEBI:29036"/>
        <dbReference type="ChEBI" id="CHEBI:30616"/>
        <dbReference type="ChEBI" id="CHEBI:43474"/>
        <dbReference type="ChEBI" id="CHEBI:456216"/>
        <dbReference type="EC" id="7.2.2.9"/>
    </reaction>
</comment>
<comment type="subcellular location">
    <subcellularLocation>
        <location evidence="1">Cell membrane</location>
        <topology evidence="1">Multi-pass membrane protein</topology>
    </subcellularLocation>
</comment>
<comment type="similarity">
    <text evidence="4">Belongs to the cation transport ATPase (P-type) (TC 3.A.3) family. Type IB subfamily.</text>
</comment>